<comment type="function">
    <text evidence="2 4 5 6 7">Component of the elongator complex which is required for multiple tRNA modifications, including mcm5U (5-methoxycarbonylmethyl uridine), mcm5s2U (5-methoxycarbonylmethyl-2-thiouridine), and ncm5U (5-carbamoylmethyl uridine) (By similarity). The elongator complex catalyzes the formation of carboxymethyluridine in the wobble base at position 34 in tRNAs (By similarity). Promotes organ development by modulating cell division rate. Required for auxin distribution or signaling. Prevents abscisic acid (ABA) signaling leading to stomatal closure and seedling growth inhibition. Involved in oxidative stress signaling. Prevents anthocyanin accumulation.</text>
</comment>
<comment type="pathway">
    <text evidence="2">tRNA modification; 5-methoxycarbonylmethyl-2-thiouridine-tRNA biosynthesis.</text>
</comment>
<comment type="subunit">
    <text evidence="2 7">Homodimer (By similarity). Component of the elongator complex which consists of ELP1/ELO2, ELP2, ELP3/ELO3, ELP4/ELO1, ELP5, and ELP6.</text>
</comment>
<comment type="subcellular location">
    <subcellularLocation>
        <location evidence="1">Cytoplasm</location>
    </subcellularLocation>
    <subcellularLocation>
        <location evidence="1">Nucleus</location>
    </subcellularLocation>
</comment>
<comment type="tissue specificity">
    <text evidence="4 5 6 7">Expressed in meristematic tissues of in roots, stems, leaves, seedlings, cotyledons, guard cells, floral buds, flowers, siliques, and shoot apices.</text>
</comment>
<comment type="disruption phenotype">
    <text evidence="4 5 6 7">Narrow leaves and reduced root growth that results from a decreased cell division rate and a reduced apical dominance. Increased abscisic acid (ABA) sensitivity and drought tolerance. Higher resistance to oxidative stress mediated by methyl viologen (MV) that blocks electron transport during photosynthesis and by CsCl in light. Accumulates anthocyanins.</text>
</comment>
<comment type="similarity">
    <text evidence="8">Belongs to the ELP1/IKA1 family.</text>
</comment>
<comment type="caution">
    <text evidence="2">The elongator complex was originally thought to play a role in transcription elongation. However, it is no longer thought to play a direct role in this process and its primary function is thought to be in tRNA modification.</text>
</comment>
<feature type="chain" id="PRO_0000416788" description="Elongator complex protein 1">
    <location>
        <begin position="1"/>
        <end position="1319"/>
    </location>
</feature>
<feature type="repeat" description="WD 1">
    <location>
        <begin position="73"/>
        <end position="112"/>
    </location>
</feature>
<feature type="repeat" description="WD 2">
    <location>
        <begin position="171"/>
        <end position="217"/>
    </location>
</feature>
<feature type="repeat" description="WD 3">
    <location>
        <begin position="272"/>
        <end position="314"/>
    </location>
</feature>
<feature type="repeat" description="WD 4">
    <location>
        <begin position="316"/>
        <end position="339"/>
    </location>
</feature>
<feature type="repeat" description="WD 5">
    <location>
        <begin position="521"/>
        <end position="561"/>
    </location>
</feature>
<feature type="repeat" description="WD 6">
    <location>
        <begin position="640"/>
        <end position="685"/>
    </location>
</feature>
<feature type="repeat" description="WD 7">
    <location>
        <begin position="1265"/>
        <end position="1302"/>
    </location>
</feature>
<feature type="region of interest" description="Mediates dimerization" evidence="2">
    <location>
        <begin position="884"/>
        <end position="1319"/>
    </location>
</feature>
<feature type="region of interest" description="Disordered" evidence="3">
    <location>
        <begin position="1188"/>
        <end position="1215"/>
    </location>
</feature>
<feature type="compositionally biased region" description="Low complexity" evidence="3">
    <location>
        <begin position="1188"/>
        <end position="1197"/>
    </location>
</feature>
<feature type="compositionally biased region" description="Basic residues" evidence="3">
    <location>
        <begin position="1201"/>
        <end position="1210"/>
    </location>
</feature>
<dbReference type="EMBL" id="AB006704">
    <property type="protein sequence ID" value="BAB08695.1"/>
    <property type="molecule type" value="Genomic_DNA"/>
</dbReference>
<dbReference type="EMBL" id="CP002688">
    <property type="protein sequence ID" value="AED91927.1"/>
    <property type="molecule type" value="Genomic_DNA"/>
</dbReference>
<dbReference type="RefSeq" id="NP_196872.1">
    <property type="nucleotide sequence ID" value="NM_121371.3"/>
</dbReference>
<dbReference type="SMR" id="Q9FNA4"/>
<dbReference type="FunCoup" id="Q9FNA4">
    <property type="interactions" value="4143"/>
</dbReference>
<dbReference type="STRING" id="3702.Q9FNA4"/>
<dbReference type="iPTMnet" id="Q9FNA4"/>
<dbReference type="PaxDb" id="3702-AT5G13680.1"/>
<dbReference type="ProteomicsDB" id="222320"/>
<dbReference type="EnsemblPlants" id="AT5G13680.1">
    <property type="protein sequence ID" value="AT5G13680.1"/>
    <property type="gene ID" value="AT5G13680"/>
</dbReference>
<dbReference type="GeneID" id="831213"/>
<dbReference type="Gramene" id="AT5G13680.1">
    <property type="protein sequence ID" value="AT5G13680.1"/>
    <property type="gene ID" value="AT5G13680"/>
</dbReference>
<dbReference type="KEGG" id="ath:AT5G13680"/>
<dbReference type="Araport" id="AT5G13680"/>
<dbReference type="TAIR" id="AT5G13680">
    <property type="gene designation" value="ABO1"/>
</dbReference>
<dbReference type="eggNOG" id="KOG1920">
    <property type="taxonomic scope" value="Eukaryota"/>
</dbReference>
<dbReference type="HOGENOM" id="CLU_001477_0_0_1"/>
<dbReference type="InParanoid" id="Q9FNA4"/>
<dbReference type="OMA" id="WRESLYC"/>
<dbReference type="PhylomeDB" id="Q9FNA4"/>
<dbReference type="UniPathway" id="UPA00988"/>
<dbReference type="PRO" id="PR:Q9FNA4"/>
<dbReference type="Proteomes" id="UP000006548">
    <property type="component" value="Chromosome 5"/>
</dbReference>
<dbReference type="ExpressionAtlas" id="Q9FNA4">
    <property type="expression patterns" value="baseline and differential"/>
</dbReference>
<dbReference type="GO" id="GO:0005737">
    <property type="term" value="C:cytoplasm"/>
    <property type="evidence" value="ECO:0007669"/>
    <property type="project" value="UniProtKB-SubCell"/>
</dbReference>
<dbReference type="GO" id="GO:0033588">
    <property type="term" value="C:elongator holoenzyme complex"/>
    <property type="evidence" value="ECO:0000314"/>
    <property type="project" value="UniProtKB"/>
</dbReference>
<dbReference type="GO" id="GO:0005634">
    <property type="term" value="C:nucleus"/>
    <property type="evidence" value="ECO:0007669"/>
    <property type="project" value="UniProtKB-SubCell"/>
</dbReference>
<dbReference type="GO" id="GO:0080178">
    <property type="term" value="P:5-carbamoylmethyl uridine residue modification"/>
    <property type="evidence" value="ECO:0000315"/>
    <property type="project" value="TAIR"/>
</dbReference>
<dbReference type="GO" id="GO:0009738">
    <property type="term" value="P:abscisic acid-activated signaling pathway"/>
    <property type="evidence" value="ECO:0007669"/>
    <property type="project" value="UniProtKB-KW"/>
</dbReference>
<dbReference type="GO" id="GO:0009734">
    <property type="term" value="P:auxin-activated signaling pathway"/>
    <property type="evidence" value="ECO:0007669"/>
    <property type="project" value="UniProtKB-KW"/>
</dbReference>
<dbReference type="GO" id="GO:0051301">
    <property type="term" value="P:cell division"/>
    <property type="evidence" value="ECO:0000315"/>
    <property type="project" value="TAIR"/>
</dbReference>
<dbReference type="GO" id="GO:0071215">
    <property type="term" value="P:cellular response to abscisic acid stimulus"/>
    <property type="evidence" value="ECO:0000315"/>
    <property type="project" value="UniProtKB"/>
</dbReference>
<dbReference type="GO" id="GO:0048530">
    <property type="term" value="P:fruit morphogenesis"/>
    <property type="evidence" value="ECO:0000315"/>
    <property type="project" value="TAIR"/>
</dbReference>
<dbReference type="GO" id="GO:0009965">
    <property type="term" value="P:leaf morphogenesis"/>
    <property type="evidence" value="ECO:0000315"/>
    <property type="project" value="TAIR"/>
</dbReference>
<dbReference type="GO" id="GO:0031538">
    <property type="term" value="P:negative regulation of anthocyanin metabolic process"/>
    <property type="evidence" value="ECO:0000315"/>
    <property type="project" value="UniProtKB"/>
</dbReference>
<dbReference type="GO" id="GO:0035265">
    <property type="term" value="P:organ growth"/>
    <property type="evidence" value="ECO:0000315"/>
    <property type="project" value="TAIR"/>
</dbReference>
<dbReference type="GO" id="GO:0008284">
    <property type="term" value="P:positive regulation of cell population proliferation"/>
    <property type="evidence" value="ECO:0000315"/>
    <property type="project" value="UniProtKB"/>
</dbReference>
<dbReference type="GO" id="GO:0009787">
    <property type="term" value="P:regulation of abscisic acid-activated signaling pathway"/>
    <property type="evidence" value="ECO:0000315"/>
    <property type="project" value="UniProtKB"/>
</dbReference>
<dbReference type="GO" id="GO:0010928">
    <property type="term" value="P:regulation of auxin mediated signaling pathway"/>
    <property type="evidence" value="ECO:0000315"/>
    <property type="project" value="UniProtKB"/>
</dbReference>
<dbReference type="GO" id="GO:2000024">
    <property type="term" value="P:regulation of leaf development"/>
    <property type="evidence" value="ECO:0000315"/>
    <property type="project" value="UniProtKB"/>
</dbReference>
<dbReference type="GO" id="GO:0009737">
    <property type="term" value="P:response to abscisic acid"/>
    <property type="evidence" value="ECO:0000315"/>
    <property type="project" value="UniProtKB"/>
</dbReference>
<dbReference type="GO" id="GO:0006979">
    <property type="term" value="P:response to oxidative stress"/>
    <property type="evidence" value="ECO:0000315"/>
    <property type="project" value="UniProtKB"/>
</dbReference>
<dbReference type="GO" id="GO:0006400">
    <property type="term" value="P:tRNA modification"/>
    <property type="evidence" value="ECO:0000315"/>
    <property type="project" value="TAIR"/>
</dbReference>
<dbReference type="GO" id="GO:0002098">
    <property type="term" value="P:tRNA wobble uridine modification"/>
    <property type="evidence" value="ECO:0007669"/>
    <property type="project" value="InterPro"/>
</dbReference>
<dbReference type="Gene3D" id="1.25.40.470">
    <property type="match status" value="1"/>
</dbReference>
<dbReference type="Gene3D" id="2.130.10.10">
    <property type="entry name" value="YVTN repeat-like/Quinoprotein amine dehydrogenase"/>
    <property type="match status" value="1"/>
</dbReference>
<dbReference type="InterPro" id="IPR056167">
    <property type="entry name" value="A-sol_ELP1"/>
</dbReference>
<dbReference type="InterPro" id="IPR006849">
    <property type="entry name" value="Elp1"/>
</dbReference>
<dbReference type="InterPro" id="IPR056165">
    <property type="entry name" value="ELP1_b-prop_2"/>
</dbReference>
<dbReference type="InterPro" id="IPR056164">
    <property type="entry name" value="ELP1_N_b-prop_1"/>
</dbReference>
<dbReference type="InterPro" id="IPR056169">
    <property type="entry name" value="HB_ELP1"/>
</dbReference>
<dbReference type="InterPro" id="IPR056166">
    <property type="entry name" value="TPR_ELP1"/>
</dbReference>
<dbReference type="InterPro" id="IPR015943">
    <property type="entry name" value="WD40/YVTN_repeat-like_dom_sf"/>
</dbReference>
<dbReference type="PANTHER" id="PTHR12747">
    <property type="entry name" value="ELONGATOR COMPLEX PROTEIN 1"/>
    <property type="match status" value="1"/>
</dbReference>
<dbReference type="PANTHER" id="PTHR12747:SF0">
    <property type="entry name" value="ELONGATOR COMPLEX PROTEIN 1"/>
    <property type="match status" value="1"/>
</dbReference>
<dbReference type="Pfam" id="PF23925">
    <property type="entry name" value="A-sol_ELP1"/>
    <property type="match status" value="1"/>
</dbReference>
<dbReference type="Pfam" id="PF04762">
    <property type="entry name" value="Beta-prop_ELP1_1st"/>
    <property type="match status" value="1"/>
</dbReference>
<dbReference type="Pfam" id="PF23797">
    <property type="entry name" value="Beta-prop_ELP1_2nd"/>
    <property type="match status" value="1"/>
</dbReference>
<dbReference type="Pfam" id="PF23936">
    <property type="entry name" value="HB_ELP1"/>
    <property type="match status" value="1"/>
</dbReference>
<dbReference type="Pfam" id="PF23878">
    <property type="entry name" value="TPR_ELP1"/>
    <property type="match status" value="1"/>
</dbReference>
<dbReference type="PIRSF" id="PIRSF017233">
    <property type="entry name" value="IKAP"/>
    <property type="match status" value="1"/>
</dbReference>
<dbReference type="SUPFAM" id="SSF69322">
    <property type="entry name" value="Tricorn protease domain 2"/>
    <property type="match status" value="1"/>
</dbReference>
<reference key="1">
    <citation type="journal article" date="1997" name="DNA Res.">
        <title>Structural analysis of Arabidopsis thaliana chromosome 5. II. Sequence features of the regions of 1,044,062 bp covered by thirteen physically assigned P1 clones.</title>
        <authorList>
            <person name="Kotani H."/>
            <person name="Nakamura Y."/>
            <person name="Sato S."/>
            <person name="Kaneko T."/>
            <person name="Asamizu E."/>
            <person name="Miyajima N."/>
            <person name="Tabata S."/>
        </authorList>
    </citation>
    <scope>NUCLEOTIDE SEQUENCE [LARGE SCALE GENOMIC DNA]</scope>
    <source>
        <strain>cv. Columbia</strain>
    </source>
</reference>
<reference key="2">
    <citation type="journal article" date="2017" name="Plant J.">
        <title>Araport11: a complete reannotation of the Arabidopsis thaliana reference genome.</title>
        <authorList>
            <person name="Cheng C.Y."/>
            <person name="Krishnakumar V."/>
            <person name="Chan A.P."/>
            <person name="Thibaud-Nissen F."/>
            <person name="Schobel S."/>
            <person name="Town C.D."/>
        </authorList>
    </citation>
    <scope>GENOME REANNOTATION</scope>
    <source>
        <strain>cv. Columbia</strain>
    </source>
</reference>
<reference key="3">
    <citation type="journal article" date="2005" name="Proc. Natl. Acad. Sci. U.S.A.">
        <title>The elongata mutants identify a functional Elongator complex in plants with a role in cell proliferation during organ growth.</title>
        <authorList>
            <person name="Nelissen H."/>
            <person name="Fleury D."/>
            <person name="Bruno L."/>
            <person name="Robles P."/>
            <person name="de Veylder L."/>
            <person name="Traas J."/>
            <person name="Micol J."/>
            <person name="Van Montagu M."/>
            <person name="Inze D."/>
            <person name="Van Lijsebettens M."/>
        </authorList>
    </citation>
    <scope>FUNCTION</scope>
    <scope>DISRUPTION PHENOTYPE</scope>
    <scope>TISSUE SPECIFICITY</scope>
</reference>
<reference key="4">
    <citation type="journal article" date="2006" name="Mol. Cell. Biol.">
        <title>Mutations in ABO1/ELO2, a subunit of holo-Elongator, increase abscisic acid sensitivity and drought tolerance in Arabidopsis thaliana.</title>
        <authorList>
            <person name="Chen Z."/>
            <person name="Zhang H."/>
            <person name="Jablonowski D."/>
            <person name="Zhou X."/>
            <person name="Ren X."/>
            <person name="Hong X."/>
            <person name="Schaffrath R."/>
            <person name="Zhu J.-K."/>
            <person name="Gong Z."/>
        </authorList>
    </citation>
    <scope>FUNCTION</scope>
    <scope>DISRUPTION PHENOTYPE</scope>
    <scope>TISSUE SPECIFICITY</scope>
    <source>
        <strain>cv. Columbia</strain>
    </source>
</reference>
<reference key="5">
    <citation type="journal article" date="2009" name="Plant J.">
        <title>Elongator mediates ABA responses, oxidative stress resistance and anthocyanin biosynthesis in Arabidopsis.</title>
        <authorList>
            <person name="Zhou X."/>
            <person name="Hua D."/>
            <person name="Chen Z."/>
            <person name="Zhou Z."/>
            <person name="Gong Z."/>
        </authorList>
    </citation>
    <scope>FUNCTION</scope>
    <scope>DISRUPTION PHENOTYPE</scope>
    <scope>TISSUE SPECIFICITY</scope>
</reference>
<reference key="6">
    <citation type="journal article" date="2010" name="Proc. Natl. Acad. Sci. U.S.A.">
        <title>Plant Elongator regulates auxin-related genes during RNA polymerase II transcription elongation.</title>
        <authorList>
            <person name="Nelissen H."/>
            <person name="De Groeve S."/>
            <person name="Fleury D."/>
            <person name="Neyt P."/>
            <person name="Bruno L."/>
            <person name="Bitonti M.B."/>
            <person name="Vandenbussche F."/>
            <person name="Van der Straeten D."/>
            <person name="Yamaguchi T."/>
            <person name="Tsukaya H."/>
            <person name="Witters E."/>
            <person name="De Jaeger G."/>
            <person name="Houben A."/>
            <person name="Van Lijsebettens M."/>
        </authorList>
    </citation>
    <scope>FUNCTION</scope>
    <scope>SUBUNIT</scope>
    <scope>TISSUE SPECIFICITY</scope>
    <scope>DISRUPTION PHENOTYPE</scope>
</reference>
<proteinExistence type="evidence at protein level"/>
<keyword id="KW-0938">Abscisic acid signaling pathway</keyword>
<keyword id="KW-0927">Auxin signaling pathway</keyword>
<keyword id="KW-0963">Cytoplasm</keyword>
<keyword id="KW-0539">Nucleus</keyword>
<keyword id="KW-1185">Reference proteome</keyword>
<keyword id="KW-0677">Repeat</keyword>
<keyword id="KW-0819">tRNA processing</keyword>
<keyword id="KW-0853">WD repeat</keyword>
<name>ELP1_ARATH</name>
<organism>
    <name type="scientific">Arabidopsis thaliana</name>
    <name type="common">Mouse-ear cress</name>
    <dbReference type="NCBI Taxonomy" id="3702"/>
    <lineage>
        <taxon>Eukaryota</taxon>
        <taxon>Viridiplantae</taxon>
        <taxon>Streptophyta</taxon>
        <taxon>Embryophyta</taxon>
        <taxon>Tracheophyta</taxon>
        <taxon>Spermatophyta</taxon>
        <taxon>Magnoliopsida</taxon>
        <taxon>eudicotyledons</taxon>
        <taxon>Gunneridae</taxon>
        <taxon>Pentapetalae</taxon>
        <taxon>rosids</taxon>
        <taxon>malvids</taxon>
        <taxon>Brassicales</taxon>
        <taxon>Brassicaceae</taxon>
        <taxon>Camelineae</taxon>
        <taxon>Arabidopsis</taxon>
    </lineage>
</organism>
<sequence length="1319" mass="146626">MKNLKLFSEVPQNIQLHSTEEVVQFAAYDIDQSRLFFASSANFVYALQLSSFQNESAGAKSAMPVEVCSIDIEPGDFITAFDYLAEKESLLIGTSHGLLLVHNVESDVTELVGNIEGGVKCISPNPTGDLLGLITGLGQLLVMTYDWALMYEKALGEVPEGGYVRETNDLSVNCGGISISWRGDGKYFATMGEVYESGCMSKKIKIWESDSGALQSSSETKEFTQGILEWMPSGAKIAAVYKRKSDDSSPSIAFFERNGLERSSFRIGEPEDATESCENLKWNSASDLLAGVVSCKTYDAIRVWFFSNNHWYLKQEIRYPREAGVTVMWDPTKPLQLICWTLSGQVSVRHFMWVTAVMEDSTAFVIDNSKILVTPLSLSLMPPPMYLFSLSFSSAVRDIAYYSRNSKNCLAVFLSDGNLSFVEFPAPNTWEDLEGKDFSVEISDCKTALGSFVHLLWLDVHSLLCVSAYGSSHNKCLSSGGYDTELHGSYLQEVEVVCHEDHVPDQVTCSGFKASITFQTLLESPVLALAWNPSKRDSAFVEFEGGKVLGYASRSEIMETRSSDDSVCFPSTCPWVRVAQVDASGVHKPLICGLDDMGRLSINGKNLCNNCSSFSFYSELANEVVTHLIILTKQDFLFIVDTKDVLNGDVALGNVFFVIDGRRRDEENMSYVNIWERGAKVIGVLNGDEAAVILQTMRGNLECIYPRKLVLSSITNALAQQRFKDAFNLVRRHRIDFNVIVDLYGWQAFLQSAVAFVEQVNNLNHVTEFVCAMKNEDVTETLYKKFSFSKKGDEVFRVKDSCSNKVSSVLQAIRKALEEHIPESPSRELCILTTLARSDPPAIEESLLRIKSVREMELLNSSDDIRKKSCPSAEEALKHLLWLLDSEAVFEAALGLYDLNLAAIVALNSQRDPKEFLPYLQELEKMPESLMHFKIDIKLQRFDSALRNIVSAGVGYFPDCMNLIKKNPQLFPLGLLLITDPEKKLVVLEAWADHLIDEKRFEDAATTYLCCCKLEKASKAYRECGDWSGVLRVGALMKLGKDEILKLAYELCEEVNALGKPAEAAKIALEYCSDISGGISLLINAREWEEALRVAFLHTADDRISVVKSSALECASGLVSEFKESIEKVGKYLTRYLAVRQRRLLLAAKLKSEERSVVDLDDDTASEASSNLSGMSAYTLGTRRGSAASVSSSNATSRARDLRRQRKSGKIRAGSAGEEMALVDHLKGMRMTDGGKRELKSLLICLVTLGEMESAQKLQQTAENFQVSQVAAVELAHDTVSSESVDEEVYCFERYAQKTRSTARDSDAFSWMLKVFISP</sequence>
<gene>
    <name type="primary">ELP1</name>
    <name type="synonym">ABO1</name>
    <name type="synonym">ELO2</name>
    <name type="ordered locus">At5g13680</name>
    <name type="ORF">MSH12.15</name>
</gene>
<protein>
    <recommendedName>
        <fullName>Elongator complex protein 1</fullName>
        <shortName>AtELP1</shortName>
    </recommendedName>
    <alternativeName>
        <fullName>Elongator component 1</fullName>
    </alternativeName>
    <alternativeName>
        <fullName>Protein ABA-OVERLY SENSITIVE 1</fullName>
    </alternativeName>
    <alternativeName>
        <fullName>Protein ELONGATA 2</fullName>
    </alternativeName>
</protein>
<evidence type="ECO:0000250" key="1"/>
<evidence type="ECO:0000250" key="2">
    <source>
        <dbReference type="UniProtKB" id="O95163"/>
    </source>
</evidence>
<evidence type="ECO:0000256" key="3">
    <source>
        <dbReference type="SAM" id="MobiDB-lite"/>
    </source>
</evidence>
<evidence type="ECO:0000269" key="4">
    <source>
    </source>
</evidence>
<evidence type="ECO:0000269" key="5">
    <source>
    </source>
</evidence>
<evidence type="ECO:0000269" key="6">
    <source>
    </source>
</evidence>
<evidence type="ECO:0000269" key="7">
    <source>
    </source>
</evidence>
<evidence type="ECO:0000305" key="8"/>
<accession>Q9FNA4</accession>